<proteinExistence type="inferred from homology"/>
<organism>
    <name type="scientific">Floropilus chiversii</name>
    <name type="common">Chaetomium chiversii</name>
    <dbReference type="NCBI Taxonomy" id="2587399"/>
    <lineage>
        <taxon>Eukaryota</taxon>
        <taxon>Fungi</taxon>
        <taxon>Dikarya</taxon>
        <taxon>Ascomycota</taxon>
        <taxon>Pezizomycotina</taxon>
        <taxon>Sordariomycetes</taxon>
        <taxon>Sordariomycetidae</taxon>
        <taxon>Sordariales</taxon>
        <taxon>Chaetomiaceae</taxon>
        <taxon>Floropilus</taxon>
    </lineage>
</organism>
<evidence type="ECO:0000255" key="1">
    <source>
        <dbReference type="PROSITE-ProRule" id="PRU00978"/>
    </source>
</evidence>
<evidence type="ECO:0000256" key="2">
    <source>
        <dbReference type="SAM" id="MobiDB-lite"/>
    </source>
</evidence>
<evidence type="ECO:0000269" key="3">
    <source>
    </source>
</evidence>
<evidence type="ECO:0000303" key="4">
    <source>
    </source>
</evidence>
<evidence type="ECO:0000305" key="5"/>
<gene>
    <name evidence="4" type="primary">radR</name>
</gene>
<keyword id="KW-0238">DNA-binding</keyword>
<keyword id="KW-0539">Nucleus</keyword>
<keyword id="KW-0804">Transcription</keyword>
<keyword id="KW-0805">Transcription regulation</keyword>
<dbReference type="EMBL" id="EU980390">
    <property type="protein sequence ID" value="ACM42404.1"/>
    <property type="molecule type" value="Genomic_DNA"/>
</dbReference>
<dbReference type="SMR" id="C5H883"/>
<dbReference type="GO" id="GO:0005634">
    <property type="term" value="C:nucleus"/>
    <property type="evidence" value="ECO:0007669"/>
    <property type="project" value="UniProtKB-SubCell"/>
</dbReference>
<dbReference type="GO" id="GO:0003677">
    <property type="term" value="F:DNA binding"/>
    <property type="evidence" value="ECO:0007669"/>
    <property type="project" value="UniProtKB-KW"/>
</dbReference>
<dbReference type="GO" id="GO:0003700">
    <property type="term" value="F:DNA-binding transcription factor activity"/>
    <property type="evidence" value="ECO:0007669"/>
    <property type="project" value="InterPro"/>
</dbReference>
<dbReference type="CDD" id="cd14688">
    <property type="entry name" value="bZIP_YAP"/>
    <property type="match status" value="1"/>
</dbReference>
<dbReference type="Gene3D" id="1.20.5.170">
    <property type="match status" value="1"/>
</dbReference>
<dbReference type="InterPro" id="IPR004827">
    <property type="entry name" value="bZIP"/>
</dbReference>
<dbReference type="InterPro" id="IPR046347">
    <property type="entry name" value="bZIP_sf"/>
</dbReference>
<dbReference type="InterPro" id="IPR052635">
    <property type="entry name" value="Sec_Metab_Biosynth_Reg"/>
</dbReference>
<dbReference type="PANTHER" id="PTHR39607:SF1">
    <property type="entry name" value="B-ZIP TRANSCRIPTION FACTOR (EUROFUNG)"/>
    <property type="match status" value="1"/>
</dbReference>
<dbReference type="PANTHER" id="PTHR39607">
    <property type="entry name" value="XANTHOCILLIN BIOSYNTHESIS CLUSTER TRANSCRIPTION FACTOR XANC-RELATED"/>
    <property type="match status" value="1"/>
</dbReference>
<dbReference type="SUPFAM" id="SSF57959">
    <property type="entry name" value="Leucine zipper domain"/>
    <property type="match status" value="1"/>
</dbReference>
<dbReference type="PROSITE" id="PS00036">
    <property type="entry name" value="BZIP_BASIC"/>
    <property type="match status" value="1"/>
</dbReference>
<protein>
    <recommendedName>
        <fullName evidence="4">Transcription factor radR</fullName>
    </recommendedName>
    <alternativeName>
        <fullName evidence="4">Radicicol biosynthesis cluster regulator</fullName>
    </alternativeName>
</protein>
<name>RADR_FLOCH</name>
<feature type="chain" id="PRO_0000443058" description="Transcription factor radR">
    <location>
        <begin position="1"/>
        <end position="453"/>
    </location>
</feature>
<feature type="domain" description="bZIP" evidence="1">
    <location>
        <begin position="30"/>
        <end position="62"/>
    </location>
</feature>
<feature type="region of interest" description="Disordered" evidence="2">
    <location>
        <begin position="1"/>
        <end position="45"/>
    </location>
</feature>
<feature type="region of interest" description="Basic motif" evidence="1">
    <location>
        <begin position="33"/>
        <end position="50"/>
    </location>
</feature>
<feature type="region of interest" description="Leucine-zipper" evidence="1">
    <location>
        <begin position="51"/>
        <end position="58"/>
    </location>
</feature>
<feature type="region of interest" description="Disordered" evidence="2">
    <location>
        <begin position="160"/>
        <end position="184"/>
    </location>
</feature>
<feature type="compositionally biased region" description="Polar residues" evidence="2">
    <location>
        <begin position="1"/>
        <end position="30"/>
    </location>
</feature>
<feature type="compositionally biased region" description="Polar residues" evidence="2">
    <location>
        <begin position="170"/>
        <end position="181"/>
    </location>
</feature>
<accession>C5H883</accession>
<sequence length="453" mass="49669">MPNNLQHQEGSYSLRSSNDVSPADDWTQTNDPKEKKRIQNRVAQRTYRNRIRARLEELENKIRCHEKASKQDGNENEDRASEKAMAQDFLITDQALQSLTLPRRVSSAGLSQEPATPPDLLLPSFFHQQQVKIPSAADELNQPKPPSSPPAWAEGQLNVAPRAAQARSIAPTSTGMHQISPSYGPPVFLPTEDLSIDIISSRGLSSSWKTAADLTVQGTHPLPAFPSCSLANIESPSPASSQATDPMDMTFHTATEANTAILPGHRSSLDERLEYVLERAEQVGFDNFDSLVTAYYSETFHGSSRLASEQRLSRNRRLPRVIAEIFRAASHWSAWERGGMNQEVIKSAECLLISEGTAARNALEGSLSLLVDGGNGSGDASSVERLVQNEIPNLWALMTSLASGTHSPRQQDRSGTALAAIMLLYFSGSMPKEQLLRLLIICLPDPVSPQKNN</sequence>
<reference key="1">
    <citation type="journal article" date="2008" name="Chem. Biol.">
        <title>Functional characterization of the biosynthesis of radicicol, an Hsp90 inhibitor resorcylic acid lactone from Chaetomium chiversii.</title>
        <authorList>
            <person name="Wang S."/>
            <person name="Xu Y."/>
            <person name="Maine E.A."/>
            <person name="Wijeratne E.M."/>
            <person name="Espinosa-Artiles P."/>
            <person name="Gunatilaka A.A."/>
            <person name="Molnar I."/>
        </authorList>
    </citation>
    <scope>NUCLEOTIDE SEQUENCE [GENOMIC DNA]</scope>
    <scope>FUNCTION</scope>
    <scope>DISRUPTION PHENOTYPE</scope>
    <source>
        <strain>CS-36-62</strain>
    </source>
</reference>
<comment type="function">
    <text evidence="3">Transcription factor that positively regulates the expression of the gene clusters that mediate the biosynthesis of pestheic acid, a diphenyl ether which is a biosynthetic precursor of the unique chloropupukeananes (PubMed:19101477).</text>
</comment>
<comment type="subcellular location">
    <subcellularLocation>
        <location evidence="5">Nucleus</location>
    </subcellularLocation>
</comment>
<comment type="disruption phenotype">
    <text evidence="3">Completely abolishes the production of radicicol (PubMed:19101477).</text>
</comment>
<comment type="similarity">
    <text evidence="5">Belongs to the bZIP family.</text>
</comment>